<reference key="1">
    <citation type="journal article" date="1998" name="Biochem. Biophys. Res. Commun.">
        <title>cDNA cloning and characterization of a constitutively expressed isoform of the human peroxin Pex11p.</title>
        <authorList>
            <person name="Abe I."/>
            <person name="Fujiki Y."/>
        </authorList>
    </citation>
    <scope>NUCLEOTIDE SEQUENCE [MRNA] (ISOFORM 1)</scope>
    <scope>SUBCELLULAR LOCATION</scope>
    <source>
        <tissue>Liver</tissue>
    </source>
</reference>
<reference key="2">
    <citation type="journal article" date="1998" name="J. Biol. Chem.">
        <title>Expression of PEX11beta mediates peroxisome proliferation in the absence of extracellular stimuli.</title>
        <authorList>
            <person name="Schrader M."/>
            <person name="Reuber B.E."/>
            <person name="Morrell J.C."/>
            <person name="Jimenez-Sanchez G."/>
            <person name="Obie C."/>
            <person name="Stroh T.A."/>
            <person name="Valle D."/>
            <person name="Schroer T.A."/>
            <person name="Gould S.J."/>
        </authorList>
    </citation>
    <scope>NUCLEOTIDE SEQUENCE [MRNA] (ISOFORM 1)</scope>
    <scope>SUBCELLULAR LOCATION</scope>
    <scope>FUNCTION</scope>
</reference>
<reference key="3">
    <citation type="submission" date="2004-06" db="EMBL/GenBank/DDBJ databases">
        <title>Cloning of human full open reading frames in Gateway(TM) system entry vector (pDONR201).</title>
        <authorList>
            <person name="Halleck A."/>
            <person name="Ebert L."/>
            <person name="Mkoundinya M."/>
            <person name="Schick M."/>
            <person name="Eisenstein S."/>
            <person name="Neubert P."/>
            <person name="Kstrang K."/>
            <person name="Schatten R."/>
            <person name="Shen B."/>
            <person name="Henze S."/>
            <person name="Mar W."/>
            <person name="Korn B."/>
            <person name="Zuo D."/>
            <person name="Hu Y."/>
            <person name="LaBaer J."/>
        </authorList>
    </citation>
    <scope>NUCLEOTIDE SEQUENCE [LARGE SCALE MRNA] (ISOFORM 1)</scope>
</reference>
<reference key="4">
    <citation type="journal article" date="2004" name="Nat. Genet.">
        <title>Complete sequencing and characterization of 21,243 full-length human cDNAs.</title>
        <authorList>
            <person name="Ota T."/>
            <person name="Suzuki Y."/>
            <person name="Nishikawa T."/>
            <person name="Otsuki T."/>
            <person name="Sugiyama T."/>
            <person name="Irie R."/>
            <person name="Wakamatsu A."/>
            <person name="Hayashi K."/>
            <person name="Sato H."/>
            <person name="Nagai K."/>
            <person name="Kimura K."/>
            <person name="Makita H."/>
            <person name="Sekine M."/>
            <person name="Obayashi M."/>
            <person name="Nishi T."/>
            <person name="Shibahara T."/>
            <person name="Tanaka T."/>
            <person name="Ishii S."/>
            <person name="Yamamoto J."/>
            <person name="Saito K."/>
            <person name="Kawai Y."/>
            <person name="Isono Y."/>
            <person name="Nakamura Y."/>
            <person name="Nagahari K."/>
            <person name="Murakami K."/>
            <person name="Yasuda T."/>
            <person name="Iwayanagi T."/>
            <person name="Wagatsuma M."/>
            <person name="Shiratori A."/>
            <person name="Sudo H."/>
            <person name="Hosoiri T."/>
            <person name="Kaku Y."/>
            <person name="Kodaira H."/>
            <person name="Kondo H."/>
            <person name="Sugawara M."/>
            <person name="Takahashi M."/>
            <person name="Kanda K."/>
            <person name="Yokoi T."/>
            <person name="Furuya T."/>
            <person name="Kikkawa E."/>
            <person name="Omura Y."/>
            <person name="Abe K."/>
            <person name="Kamihara K."/>
            <person name="Katsuta N."/>
            <person name="Sato K."/>
            <person name="Tanikawa M."/>
            <person name="Yamazaki M."/>
            <person name="Ninomiya K."/>
            <person name="Ishibashi T."/>
            <person name="Yamashita H."/>
            <person name="Murakawa K."/>
            <person name="Fujimori K."/>
            <person name="Tanai H."/>
            <person name="Kimata M."/>
            <person name="Watanabe M."/>
            <person name="Hiraoka S."/>
            <person name="Chiba Y."/>
            <person name="Ishida S."/>
            <person name="Ono Y."/>
            <person name="Takiguchi S."/>
            <person name="Watanabe S."/>
            <person name="Yosida M."/>
            <person name="Hotuta T."/>
            <person name="Kusano J."/>
            <person name="Kanehori K."/>
            <person name="Takahashi-Fujii A."/>
            <person name="Hara H."/>
            <person name="Tanase T.-O."/>
            <person name="Nomura Y."/>
            <person name="Togiya S."/>
            <person name="Komai F."/>
            <person name="Hara R."/>
            <person name="Takeuchi K."/>
            <person name="Arita M."/>
            <person name="Imose N."/>
            <person name="Musashino K."/>
            <person name="Yuuki H."/>
            <person name="Oshima A."/>
            <person name="Sasaki N."/>
            <person name="Aotsuka S."/>
            <person name="Yoshikawa Y."/>
            <person name="Matsunawa H."/>
            <person name="Ichihara T."/>
            <person name="Shiohata N."/>
            <person name="Sano S."/>
            <person name="Moriya S."/>
            <person name="Momiyama H."/>
            <person name="Satoh N."/>
            <person name="Takami S."/>
            <person name="Terashima Y."/>
            <person name="Suzuki O."/>
            <person name="Nakagawa S."/>
            <person name="Senoh A."/>
            <person name="Mizoguchi H."/>
            <person name="Goto Y."/>
            <person name="Shimizu F."/>
            <person name="Wakebe H."/>
            <person name="Hishigaki H."/>
            <person name="Watanabe T."/>
            <person name="Sugiyama A."/>
            <person name="Takemoto M."/>
            <person name="Kawakami B."/>
            <person name="Yamazaki M."/>
            <person name="Watanabe K."/>
            <person name="Kumagai A."/>
            <person name="Itakura S."/>
            <person name="Fukuzumi Y."/>
            <person name="Fujimori Y."/>
            <person name="Komiyama M."/>
            <person name="Tashiro H."/>
            <person name="Tanigami A."/>
            <person name="Fujiwara T."/>
            <person name="Ono T."/>
            <person name="Yamada K."/>
            <person name="Fujii Y."/>
            <person name="Ozaki K."/>
            <person name="Hirao M."/>
            <person name="Ohmori Y."/>
            <person name="Kawabata A."/>
            <person name="Hikiji T."/>
            <person name="Kobatake N."/>
            <person name="Inagaki H."/>
            <person name="Ikema Y."/>
            <person name="Okamoto S."/>
            <person name="Okitani R."/>
            <person name="Kawakami T."/>
            <person name="Noguchi S."/>
            <person name="Itoh T."/>
            <person name="Shigeta K."/>
            <person name="Senba T."/>
            <person name="Matsumura K."/>
            <person name="Nakajima Y."/>
            <person name="Mizuno T."/>
            <person name="Morinaga M."/>
            <person name="Sasaki M."/>
            <person name="Togashi T."/>
            <person name="Oyama M."/>
            <person name="Hata H."/>
            <person name="Watanabe M."/>
            <person name="Komatsu T."/>
            <person name="Mizushima-Sugano J."/>
            <person name="Satoh T."/>
            <person name="Shirai Y."/>
            <person name="Takahashi Y."/>
            <person name="Nakagawa K."/>
            <person name="Okumura K."/>
            <person name="Nagase T."/>
            <person name="Nomura N."/>
            <person name="Kikuchi H."/>
            <person name="Masuho Y."/>
            <person name="Yamashita R."/>
            <person name="Nakai K."/>
            <person name="Yada T."/>
            <person name="Nakamura Y."/>
            <person name="Ohara O."/>
            <person name="Isogai T."/>
            <person name="Sugano S."/>
        </authorList>
    </citation>
    <scope>NUCLEOTIDE SEQUENCE [LARGE SCALE MRNA] (ISOFORMS 1 AND 2)</scope>
    <source>
        <tissue>Testis</tissue>
    </source>
</reference>
<reference key="5">
    <citation type="journal article" date="2006" name="Nature">
        <title>The DNA sequence and biological annotation of human chromosome 1.</title>
        <authorList>
            <person name="Gregory S.G."/>
            <person name="Barlow K.F."/>
            <person name="McLay K.E."/>
            <person name="Kaul R."/>
            <person name="Swarbreck D."/>
            <person name="Dunham A."/>
            <person name="Scott C.E."/>
            <person name="Howe K.L."/>
            <person name="Woodfine K."/>
            <person name="Spencer C.C.A."/>
            <person name="Jones M.C."/>
            <person name="Gillson C."/>
            <person name="Searle S."/>
            <person name="Zhou Y."/>
            <person name="Kokocinski F."/>
            <person name="McDonald L."/>
            <person name="Evans R."/>
            <person name="Phillips K."/>
            <person name="Atkinson A."/>
            <person name="Cooper R."/>
            <person name="Jones C."/>
            <person name="Hall R.E."/>
            <person name="Andrews T.D."/>
            <person name="Lloyd C."/>
            <person name="Ainscough R."/>
            <person name="Almeida J.P."/>
            <person name="Ambrose K.D."/>
            <person name="Anderson F."/>
            <person name="Andrew R.W."/>
            <person name="Ashwell R.I.S."/>
            <person name="Aubin K."/>
            <person name="Babbage A.K."/>
            <person name="Bagguley C.L."/>
            <person name="Bailey J."/>
            <person name="Beasley H."/>
            <person name="Bethel G."/>
            <person name="Bird C.P."/>
            <person name="Bray-Allen S."/>
            <person name="Brown J.Y."/>
            <person name="Brown A.J."/>
            <person name="Buckley D."/>
            <person name="Burton J."/>
            <person name="Bye J."/>
            <person name="Carder C."/>
            <person name="Chapman J.C."/>
            <person name="Clark S.Y."/>
            <person name="Clarke G."/>
            <person name="Clee C."/>
            <person name="Cobley V."/>
            <person name="Collier R.E."/>
            <person name="Corby N."/>
            <person name="Coville G.J."/>
            <person name="Davies J."/>
            <person name="Deadman R."/>
            <person name="Dunn M."/>
            <person name="Earthrowl M."/>
            <person name="Ellington A.G."/>
            <person name="Errington H."/>
            <person name="Frankish A."/>
            <person name="Frankland J."/>
            <person name="French L."/>
            <person name="Garner P."/>
            <person name="Garnett J."/>
            <person name="Gay L."/>
            <person name="Ghori M.R.J."/>
            <person name="Gibson R."/>
            <person name="Gilby L.M."/>
            <person name="Gillett W."/>
            <person name="Glithero R.J."/>
            <person name="Grafham D.V."/>
            <person name="Griffiths C."/>
            <person name="Griffiths-Jones S."/>
            <person name="Grocock R."/>
            <person name="Hammond S."/>
            <person name="Harrison E.S.I."/>
            <person name="Hart E."/>
            <person name="Haugen E."/>
            <person name="Heath P.D."/>
            <person name="Holmes S."/>
            <person name="Holt K."/>
            <person name="Howden P.J."/>
            <person name="Hunt A.R."/>
            <person name="Hunt S.E."/>
            <person name="Hunter G."/>
            <person name="Isherwood J."/>
            <person name="James R."/>
            <person name="Johnson C."/>
            <person name="Johnson D."/>
            <person name="Joy A."/>
            <person name="Kay M."/>
            <person name="Kershaw J.K."/>
            <person name="Kibukawa M."/>
            <person name="Kimberley A.M."/>
            <person name="King A."/>
            <person name="Knights A.J."/>
            <person name="Lad H."/>
            <person name="Laird G."/>
            <person name="Lawlor S."/>
            <person name="Leongamornlert D.A."/>
            <person name="Lloyd D.M."/>
            <person name="Loveland J."/>
            <person name="Lovell J."/>
            <person name="Lush M.J."/>
            <person name="Lyne R."/>
            <person name="Martin S."/>
            <person name="Mashreghi-Mohammadi M."/>
            <person name="Matthews L."/>
            <person name="Matthews N.S.W."/>
            <person name="McLaren S."/>
            <person name="Milne S."/>
            <person name="Mistry S."/>
            <person name="Moore M.J.F."/>
            <person name="Nickerson T."/>
            <person name="O'Dell C.N."/>
            <person name="Oliver K."/>
            <person name="Palmeiri A."/>
            <person name="Palmer S.A."/>
            <person name="Parker A."/>
            <person name="Patel D."/>
            <person name="Pearce A.V."/>
            <person name="Peck A.I."/>
            <person name="Pelan S."/>
            <person name="Phelps K."/>
            <person name="Phillimore B.J."/>
            <person name="Plumb R."/>
            <person name="Rajan J."/>
            <person name="Raymond C."/>
            <person name="Rouse G."/>
            <person name="Saenphimmachak C."/>
            <person name="Sehra H.K."/>
            <person name="Sheridan E."/>
            <person name="Shownkeen R."/>
            <person name="Sims S."/>
            <person name="Skuce C.D."/>
            <person name="Smith M."/>
            <person name="Steward C."/>
            <person name="Subramanian S."/>
            <person name="Sycamore N."/>
            <person name="Tracey A."/>
            <person name="Tromans A."/>
            <person name="Van Helmond Z."/>
            <person name="Wall M."/>
            <person name="Wallis J.M."/>
            <person name="White S."/>
            <person name="Whitehead S.L."/>
            <person name="Wilkinson J.E."/>
            <person name="Willey D.L."/>
            <person name="Williams H."/>
            <person name="Wilming L."/>
            <person name="Wray P.W."/>
            <person name="Wu Z."/>
            <person name="Coulson A."/>
            <person name="Vaudin M."/>
            <person name="Sulston J.E."/>
            <person name="Durbin R.M."/>
            <person name="Hubbard T."/>
            <person name="Wooster R."/>
            <person name="Dunham I."/>
            <person name="Carter N.P."/>
            <person name="McVean G."/>
            <person name="Ross M.T."/>
            <person name="Harrow J."/>
            <person name="Olson M.V."/>
            <person name="Beck S."/>
            <person name="Rogers J."/>
            <person name="Bentley D.R."/>
        </authorList>
    </citation>
    <scope>NUCLEOTIDE SEQUENCE [LARGE SCALE GENOMIC DNA]</scope>
</reference>
<reference key="6">
    <citation type="submission" date="2005-07" db="EMBL/GenBank/DDBJ databases">
        <authorList>
            <person name="Mural R.J."/>
            <person name="Istrail S."/>
            <person name="Sutton G.G."/>
            <person name="Florea L."/>
            <person name="Halpern A.L."/>
            <person name="Mobarry C.M."/>
            <person name="Lippert R."/>
            <person name="Walenz B."/>
            <person name="Shatkay H."/>
            <person name="Dew I."/>
            <person name="Miller J.R."/>
            <person name="Flanigan M.J."/>
            <person name="Edwards N.J."/>
            <person name="Bolanos R."/>
            <person name="Fasulo D."/>
            <person name="Halldorsson B.V."/>
            <person name="Hannenhalli S."/>
            <person name="Turner R."/>
            <person name="Yooseph S."/>
            <person name="Lu F."/>
            <person name="Nusskern D.R."/>
            <person name="Shue B.C."/>
            <person name="Zheng X.H."/>
            <person name="Zhong F."/>
            <person name="Delcher A.L."/>
            <person name="Huson D.H."/>
            <person name="Kravitz S.A."/>
            <person name="Mouchard L."/>
            <person name="Reinert K."/>
            <person name="Remington K.A."/>
            <person name="Clark A.G."/>
            <person name="Waterman M.S."/>
            <person name="Eichler E.E."/>
            <person name="Adams M.D."/>
            <person name="Hunkapiller M.W."/>
            <person name="Myers E.W."/>
            <person name="Venter J.C."/>
        </authorList>
    </citation>
    <scope>NUCLEOTIDE SEQUENCE [LARGE SCALE GENOMIC DNA]</scope>
</reference>
<reference key="7">
    <citation type="journal article" date="2004" name="Genome Res.">
        <title>The status, quality, and expansion of the NIH full-length cDNA project: the Mammalian Gene Collection (MGC).</title>
        <authorList>
            <consortium name="The MGC Project Team"/>
        </authorList>
    </citation>
    <scope>NUCLEOTIDE SEQUENCE [LARGE SCALE MRNA] (ISOFORM 1)</scope>
    <source>
        <tissue>Eye</tissue>
    </source>
</reference>
<reference key="8">
    <citation type="journal article" date="2000" name="J. Cell Biol.">
        <title>PEX19 binds multiple peroxisomal membrane proteins, is predominantly cytoplasmic, and is required for peroxisome membrane synthesis.</title>
        <authorList>
            <person name="Sacksteder K.A."/>
            <person name="Jones J.M."/>
            <person name="South S.T."/>
            <person name="Li X."/>
            <person name="Liu Y."/>
            <person name="Gould S.J."/>
        </authorList>
    </citation>
    <scope>INTERACTION WITH PEX19</scope>
    <scope>SUBCELLULAR LOCATION</scope>
</reference>
<reference key="9">
    <citation type="journal article" date="2003" name="J. Biol. Chem.">
        <title>The dynamin-like GTPase DLP1 is essential for peroxisome division and is recruited to peroxisomes in part by PEX11.</title>
        <authorList>
            <person name="Li X."/>
            <person name="Gould S.J."/>
        </authorList>
    </citation>
    <scope>FUNCTION</scope>
</reference>
<reference key="10">
    <citation type="journal article" date="2009" name="Science">
        <title>Lysine acetylation targets protein complexes and co-regulates major cellular functions.</title>
        <authorList>
            <person name="Choudhary C."/>
            <person name="Kumar C."/>
            <person name="Gnad F."/>
            <person name="Nielsen M.L."/>
            <person name="Rehman M."/>
            <person name="Walther T.C."/>
            <person name="Olsen J.V."/>
            <person name="Mann M."/>
        </authorList>
    </citation>
    <scope>ACETYLATION [LARGE SCALE ANALYSIS] AT LYS-43</scope>
    <scope>IDENTIFICATION BY MASS SPECTROMETRY [LARGE SCALE ANALYSIS]</scope>
</reference>
<reference key="11">
    <citation type="journal article" date="2010" name="J. Cell Sci.">
        <title>PEX11 family members are membrane elongation factors that coordinate peroxisome proliferation and maintenance.</title>
        <authorList>
            <person name="Koch J."/>
            <person name="Pranjic K."/>
            <person name="Huber A."/>
            <person name="Ellinger A."/>
            <person name="Hartig A."/>
            <person name="Kragler F."/>
            <person name="Brocard C."/>
        </authorList>
    </citation>
    <scope>FUNCTION</scope>
    <scope>SUBUNIT</scope>
    <scope>INTERACTION WITH FIS1 AND PEX11G</scope>
    <scope>SUBCELLULAR LOCATION</scope>
</reference>
<reference key="12">
    <citation type="journal article" date="2011" name="BMC Syst. Biol.">
        <title>Initial characterization of the human central proteome.</title>
        <authorList>
            <person name="Burkard T.R."/>
            <person name="Planyavsky M."/>
            <person name="Kaupe I."/>
            <person name="Breitwieser F.P."/>
            <person name="Buerckstuemmer T."/>
            <person name="Bennett K.L."/>
            <person name="Superti-Furga G."/>
            <person name="Colinge J."/>
        </authorList>
    </citation>
    <scope>IDENTIFICATION BY MASS SPECTROMETRY [LARGE SCALE ANALYSIS]</scope>
</reference>
<reference key="13">
    <citation type="journal article" date="2012" name="J. Med. Genet.">
        <title>A novel defect of peroxisome division due to a homozygous non-sense mutation in the PEX11beta gene.</title>
        <authorList>
            <person name="Ebberink M.S."/>
            <person name="Koster J."/>
            <person name="Visser G."/>
            <person name="van Spronsen F."/>
            <person name="Stolte-Dijkstra I."/>
            <person name="Smit G.P."/>
            <person name="Fock J.M."/>
            <person name="Kemp S."/>
            <person name="Wanders R.J."/>
            <person name="Waterham H.R."/>
        </authorList>
    </citation>
    <scope>INVOLVEMENT IN PBD14B</scope>
</reference>
<reference key="14">
    <citation type="journal article" date="2015" name="Proteomics">
        <title>N-terminome analysis of the human mitochondrial proteome.</title>
        <authorList>
            <person name="Vaca Jacome A.S."/>
            <person name="Rabilloud T."/>
            <person name="Schaeffer-Reiss C."/>
            <person name="Rompais M."/>
            <person name="Ayoub D."/>
            <person name="Lane L."/>
            <person name="Bairoch A."/>
            <person name="Van Dorsselaer A."/>
            <person name="Carapito C."/>
        </authorList>
    </citation>
    <scope>IDENTIFICATION BY MASS SPECTROMETRY [LARGE SCALE ANALYSIS]</scope>
</reference>
<organism>
    <name type="scientific">Homo sapiens</name>
    <name type="common">Human</name>
    <dbReference type="NCBI Taxonomy" id="9606"/>
    <lineage>
        <taxon>Eukaryota</taxon>
        <taxon>Metazoa</taxon>
        <taxon>Chordata</taxon>
        <taxon>Craniata</taxon>
        <taxon>Vertebrata</taxon>
        <taxon>Euteleostomi</taxon>
        <taxon>Mammalia</taxon>
        <taxon>Eutheria</taxon>
        <taxon>Euarchontoglires</taxon>
        <taxon>Primates</taxon>
        <taxon>Haplorrhini</taxon>
        <taxon>Catarrhini</taxon>
        <taxon>Hominidae</taxon>
        <taxon>Homo</taxon>
    </lineage>
</organism>
<gene>
    <name type="primary">PEX11B</name>
</gene>
<accession>O96011</accession>
<accession>B3KN85</accession>
<accession>B4DXH9</accession>
<accession>Q96ET2</accession>
<proteinExistence type="evidence at protein level"/>
<protein>
    <recommendedName>
        <fullName>Peroxisomal membrane protein 11B</fullName>
    </recommendedName>
    <alternativeName>
        <fullName>Peroxin-11B</fullName>
    </alternativeName>
    <alternativeName>
        <fullName>Peroxisomal biogenesis factor 11B</fullName>
    </alternativeName>
    <alternativeName>
        <fullName>Protein PEX11 homolog beta</fullName>
        <shortName>PEX11-beta</shortName>
    </alternativeName>
</protein>
<name>PX11B_HUMAN</name>
<dbReference type="EMBL" id="AB018080">
    <property type="protein sequence ID" value="BAA34812.1"/>
    <property type="molecule type" value="mRNA"/>
</dbReference>
<dbReference type="EMBL" id="AF093670">
    <property type="protein sequence ID" value="AAC78660.1"/>
    <property type="molecule type" value="mRNA"/>
</dbReference>
<dbReference type="EMBL" id="CR542047">
    <property type="protein sequence ID" value="CAG46844.1"/>
    <property type="molecule type" value="mRNA"/>
</dbReference>
<dbReference type="EMBL" id="AK023991">
    <property type="protein sequence ID" value="BAG51247.1"/>
    <property type="molecule type" value="mRNA"/>
</dbReference>
<dbReference type="EMBL" id="AK301983">
    <property type="protein sequence ID" value="BAG63391.1"/>
    <property type="molecule type" value="mRNA"/>
</dbReference>
<dbReference type="EMBL" id="AL160282">
    <property type="status" value="NOT_ANNOTATED_CDS"/>
    <property type="molecule type" value="Genomic_DNA"/>
</dbReference>
<dbReference type="EMBL" id="CH471244">
    <property type="protein sequence ID" value="EAW71422.1"/>
    <property type="molecule type" value="Genomic_DNA"/>
</dbReference>
<dbReference type="EMBL" id="BC011963">
    <property type="protein sequence ID" value="AAH11963.1"/>
    <property type="molecule type" value="mRNA"/>
</dbReference>
<dbReference type="CCDS" id="CCDS72870.1">
    <molecule id="O96011-2"/>
</dbReference>
<dbReference type="CCDS" id="CCDS72871.1">
    <molecule id="O96011-1"/>
</dbReference>
<dbReference type="PIR" id="JE0326">
    <property type="entry name" value="JE0326"/>
</dbReference>
<dbReference type="RefSeq" id="NP_001171724.1">
    <molecule id="O96011-2"/>
    <property type="nucleotide sequence ID" value="NM_001184795.1"/>
</dbReference>
<dbReference type="RefSeq" id="NP_003837.1">
    <molecule id="O96011-1"/>
    <property type="nucleotide sequence ID" value="NM_003846.3"/>
</dbReference>
<dbReference type="SMR" id="O96011"/>
<dbReference type="BioGRID" id="114327">
    <property type="interactions" value="43"/>
</dbReference>
<dbReference type="FunCoup" id="O96011">
    <property type="interactions" value="1135"/>
</dbReference>
<dbReference type="IntAct" id="O96011">
    <property type="interactions" value="16"/>
</dbReference>
<dbReference type="MINT" id="O96011"/>
<dbReference type="STRING" id="9606.ENSP00000358312"/>
<dbReference type="GlyGen" id="O96011">
    <property type="glycosylation" value="2 sites, 1 O-linked glycan (1 site)"/>
</dbReference>
<dbReference type="iPTMnet" id="O96011"/>
<dbReference type="PhosphoSitePlus" id="O96011"/>
<dbReference type="SwissPalm" id="O96011"/>
<dbReference type="BioMuta" id="PEX11B"/>
<dbReference type="jPOST" id="O96011"/>
<dbReference type="MassIVE" id="O96011"/>
<dbReference type="PaxDb" id="9606-ENSP00000358312"/>
<dbReference type="PeptideAtlas" id="O96011"/>
<dbReference type="ProteomicsDB" id="51190">
    <molecule id="O96011-1"/>
</dbReference>
<dbReference type="ProteomicsDB" id="51191">
    <molecule id="O96011-2"/>
</dbReference>
<dbReference type="Pumba" id="O96011"/>
<dbReference type="Antibodypedia" id="33960">
    <property type="antibodies" value="122 antibodies from 26 providers"/>
</dbReference>
<dbReference type="DNASU" id="8799"/>
<dbReference type="Ensembl" id="ENST00000369306.8">
    <molecule id="O96011-1"/>
    <property type="protein sequence ID" value="ENSP00000358312.3"/>
    <property type="gene ID" value="ENSG00000131779.11"/>
</dbReference>
<dbReference type="Ensembl" id="ENST00000537888.1">
    <molecule id="O96011-2"/>
    <property type="protein sequence ID" value="ENSP00000437510.1"/>
    <property type="gene ID" value="ENSG00000131779.11"/>
</dbReference>
<dbReference type="GeneID" id="8799"/>
<dbReference type="KEGG" id="hsa:8799"/>
<dbReference type="MANE-Select" id="ENST00000369306.8">
    <property type="protein sequence ID" value="ENSP00000358312.3"/>
    <property type="RefSeq nucleotide sequence ID" value="NM_003846.3"/>
    <property type="RefSeq protein sequence ID" value="NP_003837.1"/>
</dbReference>
<dbReference type="UCSC" id="uc001eny.3">
    <molecule id="O96011-1"/>
    <property type="organism name" value="human"/>
</dbReference>
<dbReference type="AGR" id="HGNC:8853"/>
<dbReference type="CTD" id="8799"/>
<dbReference type="DisGeNET" id="8799"/>
<dbReference type="GeneCards" id="PEX11B"/>
<dbReference type="GeneReviews" id="PEX11B"/>
<dbReference type="HGNC" id="HGNC:8853">
    <property type="gene designation" value="PEX11B"/>
</dbReference>
<dbReference type="HPA" id="ENSG00000131779">
    <property type="expression patterns" value="Low tissue specificity"/>
</dbReference>
<dbReference type="MalaCards" id="PEX11B"/>
<dbReference type="MIM" id="603867">
    <property type="type" value="gene"/>
</dbReference>
<dbReference type="MIM" id="614920">
    <property type="type" value="phenotype"/>
</dbReference>
<dbReference type="neXtProt" id="NX_O96011"/>
<dbReference type="OpenTargets" id="ENSG00000131779"/>
<dbReference type="Orphanet" id="772">
    <property type="disease" value="Infantile Refsum disease"/>
</dbReference>
<dbReference type="Orphanet" id="44">
    <property type="disease" value="Neonatal adrenoleukodystrophy"/>
</dbReference>
<dbReference type="Orphanet" id="912">
    <property type="disease" value="Zellweger syndrome"/>
</dbReference>
<dbReference type="PharmGKB" id="PA33195"/>
<dbReference type="VEuPathDB" id="HostDB:ENSG00000131779"/>
<dbReference type="eggNOG" id="KOG4186">
    <property type="taxonomic scope" value="Eukaryota"/>
</dbReference>
<dbReference type="GeneTree" id="ENSGT00390000014273"/>
<dbReference type="HOGENOM" id="CLU_049216_2_0_1"/>
<dbReference type="InParanoid" id="O96011"/>
<dbReference type="OMA" id="AYHPTVA"/>
<dbReference type="OrthoDB" id="411017at2759"/>
<dbReference type="PAN-GO" id="O96011">
    <property type="GO annotations" value="3 GO annotations based on evolutionary models"/>
</dbReference>
<dbReference type="PhylomeDB" id="O96011"/>
<dbReference type="TreeFam" id="TF325704"/>
<dbReference type="PathwayCommons" id="O96011"/>
<dbReference type="Reactome" id="R-HSA-9603798">
    <property type="pathway name" value="Class I peroxisomal membrane protein import"/>
</dbReference>
<dbReference type="SignaLink" id="O96011"/>
<dbReference type="BioGRID-ORCS" id="8799">
    <property type="hits" value="39 hits in 1155 CRISPR screens"/>
</dbReference>
<dbReference type="CD-CODE" id="DEE660B4">
    <property type="entry name" value="Stress granule"/>
</dbReference>
<dbReference type="CD-CODE" id="FB4E32DD">
    <property type="entry name" value="Presynaptic clusters and postsynaptic densities"/>
</dbReference>
<dbReference type="ChiTaRS" id="PEX11B">
    <property type="organism name" value="human"/>
</dbReference>
<dbReference type="GeneWiki" id="PEX11B"/>
<dbReference type="GenomeRNAi" id="8799"/>
<dbReference type="Pharos" id="O96011">
    <property type="development level" value="Tbio"/>
</dbReference>
<dbReference type="PRO" id="PR:O96011"/>
<dbReference type="Proteomes" id="UP000005640">
    <property type="component" value="Chromosome 1"/>
</dbReference>
<dbReference type="RNAct" id="O96011">
    <property type="molecule type" value="protein"/>
</dbReference>
<dbReference type="Bgee" id="ENSG00000131779">
    <property type="expression patterns" value="Expressed in prefrontal cortex and 199 other cell types or tissues"/>
</dbReference>
<dbReference type="ExpressionAtlas" id="O96011">
    <property type="expression patterns" value="baseline and differential"/>
</dbReference>
<dbReference type="GO" id="GO:0005829">
    <property type="term" value="C:cytosol"/>
    <property type="evidence" value="ECO:0000304"/>
    <property type="project" value="Reactome"/>
</dbReference>
<dbReference type="GO" id="GO:0043231">
    <property type="term" value="C:intracellular membrane-bounded organelle"/>
    <property type="evidence" value="ECO:0000314"/>
    <property type="project" value="HPA"/>
</dbReference>
<dbReference type="GO" id="GO:0016020">
    <property type="term" value="C:membrane"/>
    <property type="evidence" value="ECO:0007005"/>
    <property type="project" value="UniProtKB"/>
</dbReference>
<dbReference type="GO" id="GO:0005739">
    <property type="term" value="C:mitochondrion"/>
    <property type="evidence" value="ECO:0007669"/>
    <property type="project" value="Ensembl"/>
</dbReference>
<dbReference type="GO" id="GO:0005654">
    <property type="term" value="C:nucleoplasm"/>
    <property type="evidence" value="ECO:0000314"/>
    <property type="project" value="HPA"/>
</dbReference>
<dbReference type="GO" id="GO:0005778">
    <property type="term" value="C:peroxisomal membrane"/>
    <property type="evidence" value="ECO:0000314"/>
    <property type="project" value="UniProtKB"/>
</dbReference>
<dbReference type="GO" id="GO:0005777">
    <property type="term" value="C:peroxisome"/>
    <property type="evidence" value="ECO:0000314"/>
    <property type="project" value="UniProtKB"/>
</dbReference>
<dbReference type="GO" id="GO:0032991">
    <property type="term" value="C:protein-containing complex"/>
    <property type="evidence" value="ECO:0000314"/>
    <property type="project" value="UniProtKB"/>
</dbReference>
<dbReference type="GO" id="GO:0042802">
    <property type="term" value="F:identical protein binding"/>
    <property type="evidence" value="ECO:0000353"/>
    <property type="project" value="UniProtKB"/>
</dbReference>
<dbReference type="GO" id="GO:0042803">
    <property type="term" value="F:protein homodimerization activity"/>
    <property type="evidence" value="ECO:0000314"/>
    <property type="project" value="UniProtKB"/>
</dbReference>
<dbReference type="GO" id="GO:0016559">
    <property type="term" value="P:peroxisome fission"/>
    <property type="evidence" value="ECO:0000314"/>
    <property type="project" value="UniProtKB"/>
</dbReference>
<dbReference type="GO" id="GO:0007031">
    <property type="term" value="P:peroxisome organization"/>
    <property type="evidence" value="ECO:0000314"/>
    <property type="project" value="UniProtKB"/>
</dbReference>
<dbReference type="GO" id="GO:0044375">
    <property type="term" value="P:regulation of peroxisome size"/>
    <property type="evidence" value="ECO:0000314"/>
    <property type="project" value="UniProtKB"/>
</dbReference>
<dbReference type="GO" id="GO:0007165">
    <property type="term" value="P:signal transduction"/>
    <property type="evidence" value="ECO:0000250"/>
    <property type="project" value="UniProtKB"/>
</dbReference>
<dbReference type="InterPro" id="IPR008733">
    <property type="entry name" value="PEX11"/>
</dbReference>
<dbReference type="PANTHER" id="PTHR12652">
    <property type="entry name" value="PEROXISOMAL BIOGENESIS FACTOR 11"/>
    <property type="match status" value="1"/>
</dbReference>
<dbReference type="PANTHER" id="PTHR12652:SF7">
    <property type="entry name" value="PEROXISOMAL MEMBRANE PROTEIN 11B"/>
    <property type="match status" value="1"/>
</dbReference>
<dbReference type="Pfam" id="PF05648">
    <property type="entry name" value="PEX11"/>
    <property type="match status" value="1"/>
</dbReference>
<sequence length="259" mass="28431">MDAWVRFSAQSQARERLCRAAQYACSLLGHALQRHGASPELQKQIRQLESHLSLGRKLLRLGNSADALESAKRAVHLSDVVLRFCITVSHLNRALYFACDNVLWAGKSGLAPRVDQEKWAQRSFRYYLFSLIMNLSRDAYEIRLLMEQESSACSRRLKGSGGGVPGGSETGGLGGPGTPGGGLPQLALKLRLQVLLLARVLRGHPPLLLDVVRNACDLFIPLDKLGLWRCGPGIVGLCGLVSSILSILTLIYPWLRLKP</sequence>
<evidence type="ECO:0000255" key="1"/>
<evidence type="ECO:0000256" key="2">
    <source>
        <dbReference type="SAM" id="MobiDB-lite"/>
    </source>
</evidence>
<evidence type="ECO:0000269" key="3">
    <source>
    </source>
</evidence>
<evidence type="ECO:0000269" key="4">
    <source>
    </source>
</evidence>
<evidence type="ECO:0000269" key="5">
    <source>
    </source>
</evidence>
<evidence type="ECO:0000269" key="6">
    <source>
    </source>
</evidence>
<evidence type="ECO:0000269" key="7">
    <source>
    </source>
</evidence>
<evidence type="ECO:0000269" key="8">
    <source>
    </source>
</evidence>
<evidence type="ECO:0000303" key="9">
    <source>
    </source>
</evidence>
<evidence type="ECO:0000305" key="10"/>
<evidence type="ECO:0007744" key="11">
    <source>
    </source>
</evidence>
<comment type="function">
    <text evidence="4 5 7">Involved in peroxisomal proliferation (PubMed:9792670). May regulate peroxisome division by recruiting the dynamin-related GTPase DNM1L to the peroxisomal membrane (PubMed:12618434). Promotes membrane protrusion and elongation on the peroxisomal surface (PubMed:20826455).</text>
</comment>
<comment type="subunit">
    <text evidence="3 5">Homodimer (PubMed:20826455). Heterodimer with PEX11G (PubMed:20826455). Interacts with PEX19 (PubMed:10704444). Interacts with FIS1 (PubMed:20826455).</text>
</comment>
<comment type="interaction">
    <interactant intactId="EBI-594824">
        <id>O96011</id>
    </interactant>
    <interactant intactId="EBI-594747">
        <id>P40855</id>
        <label>PEX19</label>
    </interactant>
    <organismsDiffer>false</organismsDiffer>
    <experiments>31</experiments>
</comment>
<comment type="subcellular location">
    <subcellularLocation>
        <location evidence="3 5 7 8">Peroxisome membrane</location>
        <topology evidence="3 7 8">Single-pass membrane protein</topology>
    </subcellularLocation>
</comment>
<comment type="alternative products">
    <event type="alternative splicing"/>
    <isoform>
        <id>O96011-1</id>
        <name>1</name>
        <sequence type="displayed"/>
    </isoform>
    <isoform>
        <id>O96011-2</id>
        <name>2</name>
        <sequence type="described" ref="VSP_042860"/>
    </isoform>
</comment>
<comment type="disease" evidence="6">
    <disease id="DI-03597">
        <name>Peroxisome biogenesis disorder 14B</name>
        <acronym>PBD14B</acronym>
        <description>An autosomal recessive peroxisome biogenesis disorder characterized clinically by mild intellectual disability, congenital cataracts, progressive hearing loss, and polyneuropathy. Additionally, recurrent migraine-like episodes following mental stress or physical exertion, not a common feature in peroxisome disorders, are observed.</description>
        <dbReference type="MIM" id="614920"/>
    </disease>
    <text>The disease is caused by variants affecting the gene represented in this entry.</text>
</comment>
<comment type="similarity">
    <text evidence="10">Belongs to the peroxin-11 family.</text>
</comment>
<comment type="caution">
    <text evidence="10">PubMed:9792670 states that both the N- and the C-terminus are located in the cytoplasm.</text>
</comment>
<feature type="chain" id="PRO_0000105967" description="Peroxisomal membrane protein 11B">
    <location>
        <begin position="1"/>
        <end position="259"/>
    </location>
</feature>
<feature type="transmembrane region" description="Helical" evidence="1">
    <location>
        <begin position="233"/>
        <end position="255"/>
    </location>
</feature>
<feature type="region of interest" description="Disordered" evidence="2">
    <location>
        <begin position="157"/>
        <end position="176"/>
    </location>
</feature>
<feature type="region of interest" description="Interaction with PEX19, PEX11G and FIS1 and peroxisome targeting" evidence="3 5">
    <location>
        <begin position="211"/>
        <end position="259"/>
    </location>
</feature>
<feature type="compositionally biased region" description="Gly residues" evidence="2">
    <location>
        <begin position="159"/>
        <end position="176"/>
    </location>
</feature>
<feature type="modified residue" description="N6-acetyllysine" evidence="11">
    <location>
        <position position="43"/>
    </location>
</feature>
<feature type="splice variant" id="VSP_042860" description="In isoform 2." evidence="9">
    <original>MDAWVRFSAQSQARERLC</original>
    <variation>MGKL</variation>
    <location>
        <begin position="1"/>
        <end position="18"/>
    </location>
</feature>
<feature type="sequence conflict" description="In Ref. 7; AAH11963." evidence="10" ref="7">
    <original>A</original>
    <variation>V</variation>
    <location>
        <position position="98"/>
    </location>
</feature>
<keyword id="KW-0007">Acetylation</keyword>
<keyword id="KW-0025">Alternative splicing</keyword>
<keyword id="KW-0472">Membrane</keyword>
<keyword id="KW-0576">Peroxisome</keyword>
<keyword id="KW-0962">Peroxisome biogenesis</keyword>
<keyword id="KW-0958">Peroxisome biogenesis disorder</keyword>
<keyword id="KW-1267">Proteomics identification</keyword>
<keyword id="KW-1185">Reference proteome</keyword>
<keyword id="KW-0812">Transmembrane</keyword>
<keyword id="KW-1133">Transmembrane helix</keyword>